<reference key="1">
    <citation type="submission" date="2007-11" db="EMBL/GenBank/DDBJ databases">
        <authorList>
            <consortium name="The Salmonella enterica serovar Paratyphi B Genome Sequencing Project"/>
            <person name="McClelland M."/>
            <person name="Sanderson E.K."/>
            <person name="Porwollik S."/>
            <person name="Spieth J."/>
            <person name="Clifton W.S."/>
            <person name="Fulton R."/>
            <person name="Cordes M."/>
            <person name="Wollam A."/>
            <person name="Shah N."/>
            <person name="Pepin K."/>
            <person name="Bhonagiri V."/>
            <person name="Nash W."/>
            <person name="Johnson M."/>
            <person name="Thiruvilangam P."/>
            <person name="Wilson R."/>
        </authorList>
    </citation>
    <scope>NUCLEOTIDE SEQUENCE [LARGE SCALE GENOMIC DNA]</scope>
    <source>
        <strain>ATCC BAA-1250 / SPB7</strain>
    </source>
</reference>
<name>E4PD_SALPB</name>
<evidence type="ECO:0000255" key="1">
    <source>
        <dbReference type="HAMAP-Rule" id="MF_01640"/>
    </source>
</evidence>
<keyword id="KW-0963">Cytoplasm</keyword>
<keyword id="KW-0520">NAD</keyword>
<keyword id="KW-0560">Oxidoreductase</keyword>
<keyword id="KW-0664">Pyridoxine biosynthesis</keyword>
<organism>
    <name type="scientific">Salmonella paratyphi B (strain ATCC BAA-1250 / SPB7)</name>
    <dbReference type="NCBI Taxonomy" id="1016998"/>
    <lineage>
        <taxon>Bacteria</taxon>
        <taxon>Pseudomonadati</taxon>
        <taxon>Pseudomonadota</taxon>
        <taxon>Gammaproteobacteria</taxon>
        <taxon>Enterobacterales</taxon>
        <taxon>Enterobacteriaceae</taxon>
        <taxon>Salmonella</taxon>
    </lineage>
</organism>
<accession>A9N3Q6</accession>
<gene>
    <name evidence="1" type="primary">epd</name>
    <name type="ordered locus">SPAB_03828</name>
</gene>
<comment type="function">
    <text evidence="1">Catalyzes the NAD-dependent conversion of D-erythrose 4-phosphate to 4-phosphoerythronate.</text>
</comment>
<comment type="catalytic activity">
    <reaction evidence="1">
        <text>D-erythrose 4-phosphate + NAD(+) + H2O = 4-phospho-D-erythronate + NADH + 2 H(+)</text>
        <dbReference type="Rhea" id="RHEA:12056"/>
        <dbReference type="ChEBI" id="CHEBI:15377"/>
        <dbReference type="ChEBI" id="CHEBI:15378"/>
        <dbReference type="ChEBI" id="CHEBI:16897"/>
        <dbReference type="ChEBI" id="CHEBI:57540"/>
        <dbReference type="ChEBI" id="CHEBI:57945"/>
        <dbReference type="ChEBI" id="CHEBI:58766"/>
        <dbReference type="EC" id="1.2.1.72"/>
    </reaction>
</comment>
<comment type="pathway">
    <text evidence="1">Cofactor biosynthesis; pyridoxine 5'-phosphate biosynthesis; pyridoxine 5'-phosphate from D-erythrose 4-phosphate: step 1/5.</text>
</comment>
<comment type="subunit">
    <text evidence="1">Homotetramer.</text>
</comment>
<comment type="subcellular location">
    <subcellularLocation>
        <location evidence="1">Cytoplasm</location>
    </subcellularLocation>
</comment>
<comment type="similarity">
    <text evidence="1">Belongs to the glyceraldehyde-3-phosphate dehydrogenase family. Epd subfamily.</text>
</comment>
<dbReference type="EC" id="1.2.1.72" evidence="1"/>
<dbReference type="EMBL" id="CP000886">
    <property type="protein sequence ID" value="ABX69159.1"/>
    <property type="molecule type" value="Genomic_DNA"/>
</dbReference>
<dbReference type="RefSeq" id="WP_000218341.1">
    <property type="nucleotide sequence ID" value="NC_010102.1"/>
</dbReference>
<dbReference type="SMR" id="A9N3Q6"/>
<dbReference type="KEGG" id="spq:SPAB_03828"/>
<dbReference type="PATRIC" id="fig|1016998.12.peg.3607"/>
<dbReference type="HOGENOM" id="CLU_030140_0_0_6"/>
<dbReference type="BioCyc" id="SENT1016998:SPAB_RS15560-MONOMER"/>
<dbReference type="UniPathway" id="UPA00244">
    <property type="reaction ID" value="UER00309"/>
</dbReference>
<dbReference type="Proteomes" id="UP000008556">
    <property type="component" value="Chromosome"/>
</dbReference>
<dbReference type="GO" id="GO:0005737">
    <property type="term" value="C:cytoplasm"/>
    <property type="evidence" value="ECO:0007669"/>
    <property type="project" value="UniProtKB-SubCell"/>
</dbReference>
<dbReference type="GO" id="GO:0048001">
    <property type="term" value="F:erythrose-4-phosphate dehydrogenase activity"/>
    <property type="evidence" value="ECO:0007669"/>
    <property type="project" value="UniProtKB-UniRule"/>
</dbReference>
<dbReference type="GO" id="GO:0051287">
    <property type="term" value="F:NAD binding"/>
    <property type="evidence" value="ECO:0007669"/>
    <property type="project" value="InterPro"/>
</dbReference>
<dbReference type="GO" id="GO:0050661">
    <property type="term" value="F:NADP binding"/>
    <property type="evidence" value="ECO:0007669"/>
    <property type="project" value="InterPro"/>
</dbReference>
<dbReference type="GO" id="GO:0006006">
    <property type="term" value="P:glucose metabolic process"/>
    <property type="evidence" value="ECO:0007669"/>
    <property type="project" value="InterPro"/>
</dbReference>
<dbReference type="GO" id="GO:0042823">
    <property type="term" value="P:pyridoxal phosphate biosynthetic process"/>
    <property type="evidence" value="ECO:0007669"/>
    <property type="project" value="UniProtKB-UniRule"/>
</dbReference>
<dbReference type="GO" id="GO:0008615">
    <property type="term" value="P:pyridoxine biosynthetic process"/>
    <property type="evidence" value="ECO:0007669"/>
    <property type="project" value="UniProtKB-UniRule"/>
</dbReference>
<dbReference type="CDD" id="cd23937">
    <property type="entry name" value="GAPDH_C_E4PDH"/>
    <property type="match status" value="1"/>
</dbReference>
<dbReference type="CDD" id="cd17892">
    <property type="entry name" value="GAPDH_N_E4PDH"/>
    <property type="match status" value="1"/>
</dbReference>
<dbReference type="FunFam" id="3.30.360.10:FF:000007">
    <property type="entry name" value="D-erythrose-4-phosphate dehydrogenase"/>
    <property type="match status" value="1"/>
</dbReference>
<dbReference type="FunFam" id="3.40.50.720:FF:000001">
    <property type="entry name" value="Glyceraldehyde-3-phosphate dehydrogenase"/>
    <property type="match status" value="1"/>
</dbReference>
<dbReference type="Gene3D" id="3.30.360.10">
    <property type="entry name" value="Dihydrodipicolinate Reductase, domain 2"/>
    <property type="match status" value="1"/>
</dbReference>
<dbReference type="Gene3D" id="3.40.50.720">
    <property type="entry name" value="NAD(P)-binding Rossmann-like Domain"/>
    <property type="match status" value="1"/>
</dbReference>
<dbReference type="HAMAP" id="MF_01640">
    <property type="entry name" value="E4P_dehydrog"/>
    <property type="match status" value="1"/>
</dbReference>
<dbReference type="InterPro" id="IPR006422">
    <property type="entry name" value="E4P_DH_bac"/>
</dbReference>
<dbReference type="InterPro" id="IPR020831">
    <property type="entry name" value="GlycerAld/Erythrose_P_DH"/>
</dbReference>
<dbReference type="InterPro" id="IPR020830">
    <property type="entry name" value="GlycerAld_3-P_DH_AS"/>
</dbReference>
<dbReference type="InterPro" id="IPR020829">
    <property type="entry name" value="GlycerAld_3-P_DH_cat"/>
</dbReference>
<dbReference type="InterPro" id="IPR020828">
    <property type="entry name" value="GlycerAld_3-P_DH_NAD(P)-bd"/>
</dbReference>
<dbReference type="InterPro" id="IPR006424">
    <property type="entry name" value="Glyceraldehyde-3-P_DH_1"/>
</dbReference>
<dbReference type="InterPro" id="IPR036291">
    <property type="entry name" value="NAD(P)-bd_dom_sf"/>
</dbReference>
<dbReference type="NCBIfam" id="TIGR01532">
    <property type="entry name" value="E4PD_g-proteo"/>
    <property type="match status" value="1"/>
</dbReference>
<dbReference type="NCBIfam" id="TIGR01534">
    <property type="entry name" value="GAPDH-I"/>
    <property type="match status" value="1"/>
</dbReference>
<dbReference type="NCBIfam" id="NF010058">
    <property type="entry name" value="PRK13535.1"/>
    <property type="match status" value="1"/>
</dbReference>
<dbReference type="PANTHER" id="PTHR43148">
    <property type="entry name" value="GLYCERALDEHYDE-3-PHOSPHATE DEHYDROGENASE 2"/>
    <property type="match status" value="1"/>
</dbReference>
<dbReference type="Pfam" id="PF02800">
    <property type="entry name" value="Gp_dh_C"/>
    <property type="match status" value="1"/>
</dbReference>
<dbReference type="Pfam" id="PF00044">
    <property type="entry name" value="Gp_dh_N"/>
    <property type="match status" value="1"/>
</dbReference>
<dbReference type="PIRSF" id="PIRSF000149">
    <property type="entry name" value="GAP_DH"/>
    <property type="match status" value="1"/>
</dbReference>
<dbReference type="PRINTS" id="PR00078">
    <property type="entry name" value="G3PDHDRGNASE"/>
</dbReference>
<dbReference type="SMART" id="SM00846">
    <property type="entry name" value="Gp_dh_N"/>
    <property type="match status" value="1"/>
</dbReference>
<dbReference type="SUPFAM" id="SSF55347">
    <property type="entry name" value="Glyceraldehyde-3-phosphate dehydrogenase-like, C-terminal domain"/>
    <property type="match status" value="1"/>
</dbReference>
<dbReference type="SUPFAM" id="SSF51735">
    <property type="entry name" value="NAD(P)-binding Rossmann-fold domains"/>
    <property type="match status" value="1"/>
</dbReference>
<dbReference type="PROSITE" id="PS00071">
    <property type="entry name" value="GAPDH"/>
    <property type="match status" value="1"/>
</dbReference>
<sequence length="348" mass="38129">MTVRIAINGFGRIGRNVVRALYESGRRAEITVVAINELADAAGMAHLLKYDTSHGRFAWEVRHEREQLFVGDDVIRILHERTLADLPWRELGVDVVLDCTGVYGNREHGEAHIAAGAKKVLFSHPGSNDLDATVVFGVNQNQLRAEHRIVSNASCTTNCIIPVIKLLDDAYGIESGTVTTIHSAMNDQQVIDAYHSDLRRTRAASQSIIPVDTKLAAGITRIFPQFNDRFEAIAVRVPTINVTAIDLSVTVKKTVKASEVNQLLQKAAQGAFHGIVDYTESPLVSIDFNHDPHSAIVDGTQTRVSGAHLIKTLVWCDNEWGFANRMLDTTLAMAAVGFRLDASASTKL</sequence>
<proteinExistence type="inferred from homology"/>
<protein>
    <recommendedName>
        <fullName evidence="1">D-erythrose-4-phosphate dehydrogenase</fullName>
        <shortName evidence="1">E4PDH</shortName>
        <ecNumber evidence="1">1.2.1.72</ecNumber>
    </recommendedName>
</protein>
<feature type="chain" id="PRO_1000088208" description="D-erythrose-4-phosphate dehydrogenase">
    <location>
        <begin position="1"/>
        <end position="348"/>
    </location>
</feature>
<feature type="active site" description="Nucleophile" evidence="1">
    <location>
        <position position="155"/>
    </location>
</feature>
<feature type="binding site" evidence="1">
    <location>
        <begin position="12"/>
        <end position="13"/>
    </location>
    <ligand>
        <name>NAD(+)</name>
        <dbReference type="ChEBI" id="CHEBI:57540"/>
    </ligand>
</feature>
<feature type="binding site" evidence="1">
    <location>
        <position position="81"/>
    </location>
    <ligand>
        <name>NAD(+)</name>
        <dbReference type="ChEBI" id="CHEBI:57540"/>
    </ligand>
</feature>
<feature type="binding site" evidence="1">
    <location>
        <begin position="154"/>
        <end position="156"/>
    </location>
    <ligand>
        <name>substrate</name>
    </ligand>
</feature>
<feature type="binding site" evidence="1">
    <location>
        <position position="200"/>
    </location>
    <ligand>
        <name>substrate</name>
    </ligand>
</feature>
<feature type="binding site" evidence="1">
    <location>
        <begin position="213"/>
        <end position="214"/>
    </location>
    <ligand>
        <name>substrate</name>
    </ligand>
</feature>
<feature type="binding site" evidence="1">
    <location>
        <position position="236"/>
    </location>
    <ligand>
        <name>substrate</name>
    </ligand>
</feature>
<feature type="binding site" evidence="1">
    <location>
        <position position="318"/>
    </location>
    <ligand>
        <name>NAD(+)</name>
        <dbReference type="ChEBI" id="CHEBI:57540"/>
    </ligand>
</feature>
<feature type="site" description="Activates thiol group during catalysis" evidence="1">
    <location>
        <position position="182"/>
    </location>
</feature>